<protein>
    <recommendedName>
        <fullName evidence="4">Dynein axonemal intermediate chain 7</fullName>
    </recommendedName>
</protein>
<organism>
    <name type="scientific">Bos taurus</name>
    <name type="common">Bovine</name>
    <dbReference type="NCBI Taxonomy" id="9913"/>
    <lineage>
        <taxon>Eukaryota</taxon>
        <taxon>Metazoa</taxon>
        <taxon>Chordata</taxon>
        <taxon>Craniata</taxon>
        <taxon>Vertebrata</taxon>
        <taxon>Euteleostomi</taxon>
        <taxon>Mammalia</taxon>
        <taxon>Eutheria</taxon>
        <taxon>Laurasiatheria</taxon>
        <taxon>Artiodactyla</taxon>
        <taxon>Ruminantia</taxon>
        <taxon>Pecora</taxon>
        <taxon>Bovidae</taxon>
        <taxon>Bovinae</taxon>
        <taxon>Bos</taxon>
    </lineage>
</organism>
<sequence length="715" mass="83144">MSGSKKKKITKADRLKQILEEEEKRQKEEEEARVKYEKEEMERLEIQRIENEKLQKLEAKDLERRNEELEELYLLEACFPEAEKLKRDNRFLSQWKHYIECDGSPDPSIAQEINTFITLWKEETNETLEEVIEKSKLVLNLIEKLKLILLETPPYDLQGKNIIQYQESILELQELLHLKFNRATEILLRQASTLADLDSGNMEKVIQDENVTLYIWANLKKNPRHRSIRFSETQTGFEIPRILATSDIALRLLHTHYDHVTPLSPVLTPSQEHISIVTDFVKEEVKSVQTAVSKDLQEENKQENESNSVHEEETKAEGQGDVEEQMCPVQEEPEATKYEMEMKLLSETVSAAQELLLENASEKPYFLEENEVDLCQFTTLGGVYHLDILELPPQCKPMKGWMIVEILKEGLQKYTYPPETTEDLEAENVFPPIEVTLEVHENVIFFENPMVARWDAEGKQWKTDGISNVSYKSEERLITFNLETFCPVTLIQDAHINMPYQSWELRPLDVNKVLLTITTVFTELQIQIKENLCMLASIKVNNKNHSSILEEKWMTPVSFIIALKKAGLNIFPTGHSHLYVVINYKHPSVEVKAYRQMALLSSAFAFCWSKWNTACESKKTVFQVREHLLKEEPIRNPNWTLLMFSGDRAQSLKINESSDAFSEALKEETEFHSTLYHMVKDFASQEAMRAVRRSNCQFVDSVCHMLLSTRLLSYS</sequence>
<comment type="function">
    <text evidence="2">Via its association with the multisubunit axonemal dynein complex, is potentially involved in the regulation of cilia function. May act as a cell cycle regulator.</text>
</comment>
<comment type="subunit">
    <text evidence="2">Part of the multisubunit axonemal dynein complex formed at least of two heavy chains and a number of intermediate and light chains. Associates with tubulin. Interacts with microtubule.</text>
</comment>
<comment type="subcellular location">
    <subcellularLocation>
        <location evidence="2">Cell projection</location>
        <location evidence="2">Cilium</location>
    </subcellularLocation>
    <subcellularLocation>
        <location evidence="2">Cytoplasm</location>
    </subcellularLocation>
    <text evidence="2">Colocalizes with microtubules in interphase.</text>
</comment>
<comment type="PTM">
    <text evidence="2">Ubiquitinated. Ubiquitination leads to its degradation through the 26S proteasome. Ubiquitin-proteasome-mediated DNAI7 degradation occurs in mitosis.</text>
</comment>
<comment type="similarity">
    <text evidence="4">Belongs to the DNAI7 family.</text>
</comment>
<dbReference type="EMBL" id="BC114007">
    <property type="protein sequence ID" value="AAI14008.1"/>
    <property type="molecule type" value="mRNA"/>
</dbReference>
<dbReference type="RefSeq" id="NP_001039747.1">
    <property type="nucleotide sequence ID" value="NM_001046282.2"/>
</dbReference>
<dbReference type="EMDB" id="EMD-50664"/>
<dbReference type="SMR" id="Q29RU8"/>
<dbReference type="FunCoup" id="Q29RU8">
    <property type="interactions" value="171"/>
</dbReference>
<dbReference type="STRING" id="9913.ENSBTAP00000059507"/>
<dbReference type="PaxDb" id="9913-ENSBTAP00000050480"/>
<dbReference type="Ensembl" id="ENSBTAT00000056453.4">
    <property type="protein sequence ID" value="ENSBTAP00000050480.3"/>
    <property type="gene ID" value="ENSBTAG00000002972.7"/>
</dbReference>
<dbReference type="GeneID" id="526444"/>
<dbReference type="KEGG" id="bta:526444"/>
<dbReference type="CTD" id="55259"/>
<dbReference type="VEuPathDB" id="HostDB:ENSBTAG00000002972"/>
<dbReference type="VGNC" id="VGNC:99768">
    <property type="gene designation" value="DNAI7"/>
</dbReference>
<dbReference type="eggNOG" id="ENOG502QQM9">
    <property type="taxonomic scope" value="Eukaryota"/>
</dbReference>
<dbReference type="GeneTree" id="ENSGT00390000004708"/>
<dbReference type="InParanoid" id="Q29RU8"/>
<dbReference type="OrthoDB" id="297923at2759"/>
<dbReference type="Proteomes" id="UP000009136">
    <property type="component" value="Chromosome 5"/>
</dbReference>
<dbReference type="Bgee" id="ENSBTAG00000002972">
    <property type="expression patterns" value="Expressed in semen and 105 other cell types or tissues"/>
</dbReference>
<dbReference type="GO" id="GO:0005858">
    <property type="term" value="C:axonemal dynein complex"/>
    <property type="evidence" value="ECO:0000250"/>
    <property type="project" value="UniProtKB"/>
</dbReference>
<dbReference type="GO" id="GO:0005930">
    <property type="term" value="C:axoneme"/>
    <property type="evidence" value="ECO:0000318"/>
    <property type="project" value="GO_Central"/>
</dbReference>
<dbReference type="GO" id="GO:0005929">
    <property type="term" value="C:cilium"/>
    <property type="evidence" value="ECO:0000250"/>
    <property type="project" value="UniProtKB"/>
</dbReference>
<dbReference type="GO" id="GO:0048487">
    <property type="term" value="F:beta-tubulin binding"/>
    <property type="evidence" value="ECO:0000250"/>
    <property type="project" value="UniProtKB"/>
</dbReference>
<dbReference type="GO" id="GO:0008017">
    <property type="term" value="F:microtubule binding"/>
    <property type="evidence" value="ECO:0000250"/>
    <property type="project" value="UniProtKB"/>
</dbReference>
<dbReference type="InterPro" id="IPR031826">
    <property type="entry name" value="IC97/Casc1_N"/>
</dbReference>
<dbReference type="InterPro" id="IPR023247">
    <property type="entry name" value="IC97/Dnai7-like"/>
</dbReference>
<dbReference type="PANTHER" id="PTHR20929:SF11">
    <property type="entry name" value="DYNEIN AXONEMAL INTERMEDIATE CHAIN 7"/>
    <property type="match status" value="1"/>
</dbReference>
<dbReference type="PANTHER" id="PTHR20929">
    <property type="entry name" value="LUNG ADENOMA SUSCEPTIBILITY 1-RELATED"/>
    <property type="match status" value="1"/>
</dbReference>
<dbReference type="Pfam" id="PF15927">
    <property type="entry name" value="Casc1_N"/>
    <property type="match status" value="1"/>
</dbReference>
<dbReference type="PRINTS" id="PR02043">
    <property type="entry name" value="CANCERSCCP1"/>
</dbReference>
<gene>
    <name evidence="1" type="primary">DNAI7</name>
</gene>
<evidence type="ECO:0000250" key="1">
    <source>
        <dbReference type="UniProtKB" id="Q6TDU7"/>
    </source>
</evidence>
<evidence type="ECO:0000250" key="2">
    <source>
        <dbReference type="UniProtKB" id="Q6TDU8"/>
    </source>
</evidence>
<evidence type="ECO:0000256" key="3">
    <source>
        <dbReference type="SAM" id="MobiDB-lite"/>
    </source>
</evidence>
<evidence type="ECO:0000305" key="4"/>
<proteinExistence type="evidence at transcript level"/>
<accession>Q29RU8</accession>
<name>DNAI7_BOVIN</name>
<keyword id="KW-0966">Cell projection</keyword>
<keyword id="KW-0963">Cytoplasm</keyword>
<keyword id="KW-1185">Reference proteome</keyword>
<keyword id="KW-0832">Ubl conjugation</keyword>
<feature type="chain" id="PRO_0000332730" description="Dynein axonemal intermediate chain 7">
    <location>
        <begin position="1"/>
        <end position="715"/>
    </location>
</feature>
<feature type="region of interest" description="Disordered" evidence="3">
    <location>
        <begin position="291"/>
        <end position="322"/>
    </location>
</feature>
<feature type="compositionally biased region" description="Basic and acidic residues" evidence="3">
    <location>
        <begin position="295"/>
        <end position="318"/>
    </location>
</feature>
<reference key="1">
    <citation type="submission" date="2006-02" db="EMBL/GenBank/DDBJ databases">
        <authorList>
            <consortium name="NIH - Mammalian Gene Collection (MGC) project"/>
        </authorList>
    </citation>
    <scope>NUCLEOTIDE SEQUENCE [LARGE SCALE MRNA]</scope>
    <source>
        <strain>Hereford</strain>
        <tissue>Testis</tissue>
    </source>
</reference>